<keyword id="KW-0963">Cytoplasm</keyword>
<keyword id="KW-0255">Endonuclease</keyword>
<keyword id="KW-0378">Hydrolase</keyword>
<keyword id="KW-0464">Manganese</keyword>
<keyword id="KW-0479">Metal-binding</keyword>
<keyword id="KW-0540">Nuclease</keyword>
<gene>
    <name evidence="1" type="primary">rnhB</name>
    <name type="ordered locus">BOV_0398</name>
</gene>
<feature type="chain" id="PRO_1000031120" description="Ribonuclease HII">
    <location>
        <begin position="1"/>
        <end position="220"/>
    </location>
</feature>
<feature type="domain" description="RNase H type-2" evidence="2">
    <location>
        <begin position="32"/>
        <end position="220"/>
    </location>
</feature>
<feature type="binding site" evidence="1">
    <location>
        <position position="38"/>
    </location>
    <ligand>
        <name>a divalent metal cation</name>
        <dbReference type="ChEBI" id="CHEBI:60240"/>
    </ligand>
</feature>
<feature type="binding site" evidence="1">
    <location>
        <position position="39"/>
    </location>
    <ligand>
        <name>a divalent metal cation</name>
        <dbReference type="ChEBI" id="CHEBI:60240"/>
    </ligand>
</feature>
<feature type="binding site" evidence="1">
    <location>
        <position position="130"/>
    </location>
    <ligand>
        <name>a divalent metal cation</name>
        <dbReference type="ChEBI" id="CHEBI:60240"/>
    </ligand>
</feature>
<name>RNH2_BRUO2</name>
<dbReference type="EC" id="3.1.26.4" evidence="1"/>
<dbReference type="EMBL" id="CP000708">
    <property type="protein sequence ID" value="ABQ61409.1"/>
    <property type="molecule type" value="Genomic_DNA"/>
</dbReference>
<dbReference type="RefSeq" id="WP_008933793.1">
    <property type="nucleotide sequence ID" value="NC_009505.1"/>
</dbReference>
<dbReference type="SMR" id="A5VNW6"/>
<dbReference type="GeneID" id="45123879"/>
<dbReference type="KEGG" id="bov:BOV_0398"/>
<dbReference type="HOGENOM" id="CLU_036532_3_2_5"/>
<dbReference type="PhylomeDB" id="A5VNW6"/>
<dbReference type="Proteomes" id="UP000006383">
    <property type="component" value="Chromosome I"/>
</dbReference>
<dbReference type="GO" id="GO:0005737">
    <property type="term" value="C:cytoplasm"/>
    <property type="evidence" value="ECO:0007669"/>
    <property type="project" value="UniProtKB-SubCell"/>
</dbReference>
<dbReference type="GO" id="GO:0032299">
    <property type="term" value="C:ribonuclease H2 complex"/>
    <property type="evidence" value="ECO:0007669"/>
    <property type="project" value="TreeGrafter"/>
</dbReference>
<dbReference type="GO" id="GO:0030145">
    <property type="term" value="F:manganese ion binding"/>
    <property type="evidence" value="ECO:0007669"/>
    <property type="project" value="UniProtKB-UniRule"/>
</dbReference>
<dbReference type="GO" id="GO:0003723">
    <property type="term" value="F:RNA binding"/>
    <property type="evidence" value="ECO:0007669"/>
    <property type="project" value="InterPro"/>
</dbReference>
<dbReference type="GO" id="GO:0004523">
    <property type="term" value="F:RNA-DNA hybrid ribonuclease activity"/>
    <property type="evidence" value="ECO:0007669"/>
    <property type="project" value="UniProtKB-UniRule"/>
</dbReference>
<dbReference type="GO" id="GO:0043137">
    <property type="term" value="P:DNA replication, removal of RNA primer"/>
    <property type="evidence" value="ECO:0007669"/>
    <property type="project" value="TreeGrafter"/>
</dbReference>
<dbReference type="GO" id="GO:0006298">
    <property type="term" value="P:mismatch repair"/>
    <property type="evidence" value="ECO:0007669"/>
    <property type="project" value="TreeGrafter"/>
</dbReference>
<dbReference type="CDD" id="cd07182">
    <property type="entry name" value="RNase_HII_bacteria_HII_like"/>
    <property type="match status" value="1"/>
</dbReference>
<dbReference type="Gene3D" id="3.30.420.10">
    <property type="entry name" value="Ribonuclease H-like superfamily/Ribonuclease H"/>
    <property type="match status" value="1"/>
</dbReference>
<dbReference type="HAMAP" id="MF_00052_B">
    <property type="entry name" value="RNase_HII_B"/>
    <property type="match status" value="1"/>
</dbReference>
<dbReference type="InterPro" id="IPR022898">
    <property type="entry name" value="RNase_HII"/>
</dbReference>
<dbReference type="InterPro" id="IPR001352">
    <property type="entry name" value="RNase_HII/HIII"/>
</dbReference>
<dbReference type="InterPro" id="IPR024567">
    <property type="entry name" value="RNase_HII/HIII_dom"/>
</dbReference>
<dbReference type="InterPro" id="IPR012337">
    <property type="entry name" value="RNaseH-like_sf"/>
</dbReference>
<dbReference type="InterPro" id="IPR036397">
    <property type="entry name" value="RNaseH_sf"/>
</dbReference>
<dbReference type="NCBIfam" id="NF000595">
    <property type="entry name" value="PRK00015.1-3"/>
    <property type="match status" value="1"/>
</dbReference>
<dbReference type="PANTHER" id="PTHR10954">
    <property type="entry name" value="RIBONUCLEASE H2 SUBUNIT A"/>
    <property type="match status" value="1"/>
</dbReference>
<dbReference type="PANTHER" id="PTHR10954:SF18">
    <property type="entry name" value="RIBONUCLEASE HII"/>
    <property type="match status" value="1"/>
</dbReference>
<dbReference type="Pfam" id="PF01351">
    <property type="entry name" value="RNase_HII"/>
    <property type="match status" value="1"/>
</dbReference>
<dbReference type="SUPFAM" id="SSF53098">
    <property type="entry name" value="Ribonuclease H-like"/>
    <property type="match status" value="1"/>
</dbReference>
<dbReference type="PROSITE" id="PS51975">
    <property type="entry name" value="RNASE_H_2"/>
    <property type="match status" value="1"/>
</dbReference>
<comment type="function">
    <text evidence="1">Endonuclease that specifically degrades the RNA of RNA-DNA hybrids.</text>
</comment>
<comment type="catalytic activity">
    <reaction evidence="1">
        <text>Endonucleolytic cleavage to 5'-phosphomonoester.</text>
        <dbReference type="EC" id="3.1.26.4"/>
    </reaction>
</comment>
<comment type="cofactor">
    <cofactor evidence="1">
        <name>Mn(2+)</name>
        <dbReference type="ChEBI" id="CHEBI:29035"/>
    </cofactor>
    <cofactor evidence="1">
        <name>Mg(2+)</name>
        <dbReference type="ChEBI" id="CHEBI:18420"/>
    </cofactor>
    <text evidence="1">Manganese or magnesium. Binds 1 divalent metal ion per monomer in the absence of substrate. May bind a second metal ion after substrate binding.</text>
</comment>
<comment type="subcellular location">
    <subcellularLocation>
        <location evidence="1">Cytoplasm</location>
    </subcellularLocation>
</comment>
<comment type="similarity">
    <text evidence="1">Belongs to the RNase HII family.</text>
</comment>
<protein>
    <recommendedName>
        <fullName evidence="1">Ribonuclease HII</fullName>
        <shortName evidence="1">RNase HII</shortName>
        <ecNumber evidence="1">3.1.26.4</ecNumber>
    </recommendedName>
</protein>
<organism>
    <name type="scientific">Brucella ovis (strain ATCC 25840 / 63/290 / NCTC 10512)</name>
    <dbReference type="NCBI Taxonomy" id="444178"/>
    <lineage>
        <taxon>Bacteria</taxon>
        <taxon>Pseudomonadati</taxon>
        <taxon>Pseudomonadota</taxon>
        <taxon>Alphaproteobacteria</taxon>
        <taxon>Hyphomicrobiales</taxon>
        <taxon>Brucellaceae</taxon>
        <taxon>Brucella/Ochrobactrum group</taxon>
        <taxon>Brucella</taxon>
    </lineage>
</organism>
<evidence type="ECO:0000255" key="1">
    <source>
        <dbReference type="HAMAP-Rule" id="MF_00052"/>
    </source>
</evidence>
<evidence type="ECO:0000255" key="2">
    <source>
        <dbReference type="PROSITE-ProRule" id="PRU01319"/>
    </source>
</evidence>
<accession>A5VNW6</accession>
<reference key="1">
    <citation type="journal article" date="2009" name="PLoS ONE">
        <title>Genome degradation in Brucella ovis corresponds with narrowing of its host range and tissue tropism.</title>
        <authorList>
            <person name="Tsolis R.M."/>
            <person name="Seshadri R."/>
            <person name="Santos R.L."/>
            <person name="Sangari F.J."/>
            <person name="Lobo J.M."/>
            <person name="de Jong M.F."/>
            <person name="Ren Q."/>
            <person name="Myers G."/>
            <person name="Brinkac L.M."/>
            <person name="Nelson W.C."/>
            <person name="Deboy R.T."/>
            <person name="Angiuoli S."/>
            <person name="Khouri H."/>
            <person name="Dimitrov G."/>
            <person name="Robinson J.R."/>
            <person name="Mulligan S."/>
            <person name="Walker R.L."/>
            <person name="Elzer P.E."/>
            <person name="Hassan K.A."/>
            <person name="Paulsen I.T."/>
        </authorList>
    </citation>
    <scope>NUCLEOTIDE SEQUENCE [LARGE SCALE GENOMIC DNA]</scope>
    <source>
        <strain>ATCC 25840 / 63/290 / NCTC 10512</strain>
    </source>
</reference>
<proteinExistence type="inferred from homology"/>
<sequence length="220" mass="23375">MKRSASDSPLLFDLPLAPDFSQEQQLMKRGLKHIAGIDEAGRGPLAGPVVAAAVVLDQNDLPEGLDDSKRLTAARREALYEIILTKAITVSVASLSARSIDASDIRKAALEAMRRAVIGLTLKPCHALVDGRDVPPGLSCPGSALVKGDQRSVSIAAASIVAKVTRDRMMIRAGAAHPPYGLEIHAGYATQKHRAAIESEGPVPGLHRYTFAPIKGRFDC</sequence>